<accession>A5F7R5</accession>
<accession>A5F7S6</accession>
<protein>
    <recommendedName>
        <fullName>Putative ribosomal RNA large subunit methyltransferase F</fullName>
        <ecNumber evidence="1">2.1.1.181</ecNumber>
    </recommendedName>
    <alternativeName>
        <fullName evidence="1">23S rRNA mA1618 methyltransferase</fullName>
    </alternativeName>
    <alternativeName>
        <fullName evidence="1">rRNA adenine N-6-methyltransferase</fullName>
    </alternativeName>
</protein>
<gene>
    <name evidence="1" type="primary">rlmF</name>
    <name type="ordered locus">VC0395_A1219/VC0395_A1221</name>
    <name type="ordered locus">VC395_1730/VC395_1732</name>
</gene>
<comment type="function">
    <text evidence="1">Specifically methylates the adenine in position 1618 of 23S rRNA.</text>
</comment>
<comment type="catalytic activity">
    <reaction evidence="1">
        <text>adenosine(1618) in 23S rRNA + S-adenosyl-L-methionine = N(6)-methyladenosine(1618) in 23S rRNA + S-adenosyl-L-homocysteine + H(+)</text>
        <dbReference type="Rhea" id="RHEA:16497"/>
        <dbReference type="Rhea" id="RHEA-COMP:10229"/>
        <dbReference type="Rhea" id="RHEA-COMP:10231"/>
        <dbReference type="ChEBI" id="CHEBI:15378"/>
        <dbReference type="ChEBI" id="CHEBI:57856"/>
        <dbReference type="ChEBI" id="CHEBI:59789"/>
        <dbReference type="ChEBI" id="CHEBI:74411"/>
        <dbReference type="ChEBI" id="CHEBI:74449"/>
        <dbReference type="EC" id="2.1.1.181"/>
    </reaction>
</comment>
<comment type="subcellular location">
    <subcellularLocation>
        <location evidence="1">Cytoplasm</location>
    </subcellularLocation>
</comment>
<comment type="similarity">
    <text evidence="1">Belongs to the methyltransferase superfamily. METTL16/RlmF family.</text>
</comment>
<comment type="caution">
    <text evidence="3">Could be the product of a pseudogene. Sequence is interrupted by the insertion of an IS1004 element.</text>
</comment>
<feature type="chain" id="PRO_0000349974" description="Putative ribosomal RNA large subunit methyltransferase F">
    <location>
        <begin position="1"/>
        <end position="362"/>
    </location>
</feature>
<feature type="region of interest" description="Disordered" evidence="2">
    <location>
        <begin position="1"/>
        <end position="40"/>
    </location>
</feature>
<feature type="compositionally biased region" description="Basic residues" evidence="2">
    <location>
        <begin position="1"/>
        <end position="11"/>
    </location>
</feature>
<dbReference type="EC" id="2.1.1.181" evidence="1"/>
<dbReference type="EMBL" id="CP000627">
    <property type="protein sequence ID" value="ABQ19637.1"/>
    <property type="status" value="ALT_SEQ"/>
    <property type="molecule type" value="Genomic_DNA"/>
</dbReference>
<dbReference type="EMBL" id="CP000627">
    <property type="protein sequence ID" value="ABQ21734.1"/>
    <property type="status" value="ALT_SEQ"/>
    <property type="molecule type" value="Genomic_DNA"/>
</dbReference>
<dbReference type="EMBL" id="CP001235">
    <property type="status" value="NOT_ANNOTATED_CDS"/>
    <property type="molecule type" value="Genomic_DNA"/>
</dbReference>
<dbReference type="SMR" id="A5F7R5"/>
<dbReference type="KEGG" id="vco:VC0395_A1219"/>
<dbReference type="KEGG" id="vco:VC0395_A1221"/>
<dbReference type="Proteomes" id="UP000000249">
    <property type="component" value="Chromosome 2"/>
</dbReference>
<dbReference type="GO" id="GO:0005737">
    <property type="term" value="C:cytoplasm"/>
    <property type="evidence" value="ECO:0007669"/>
    <property type="project" value="UniProtKB-SubCell"/>
</dbReference>
<dbReference type="GO" id="GO:0052907">
    <property type="term" value="F:23S rRNA (adenine(1618)-N(6))-methyltransferase activity"/>
    <property type="evidence" value="ECO:0007669"/>
    <property type="project" value="UniProtKB-EC"/>
</dbReference>
<dbReference type="GO" id="GO:0070475">
    <property type="term" value="P:rRNA base methylation"/>
    <property type="evidence" value="ECO:0007669"/>
    <property type="project" value="TreeGrafter"/>
</dbReference>
<dbReference type="FunFam" id="3.40.50.150:FF:000045">
    <property type="entry name" value="Ribosomal RNA large subunit methyltransferase F"/>
    <property type="match status" value="1"/>
</dbReference>
<dbReference type="Gene3D" id="3.40.50.150">
    <property type="entry name" value="Vaccinia Virus protein VP39"/>
    <property type="match status" value="1"/>
</dbReference>
<dbReference type="HAMAP" id="MF_01848">
    <property type="entry name" value="23SrRNA_methyltr_F"/>
    <property type="match status" value="1"/>
</dbReference>
<dbReference type="InterPro" id="IPR010286">
    <property type="entry name" value="METTL16/RlmF"/>
</dbReference>
<dbReference type="InterPro" id="IPR016909">
    <property type="entry name" value="rRNA_lsu_MeTfrase_F"/>
</dbReference>
<dbReference type="InterPro" id="IPR029063">
    <property type="entry name" value="SAM-dependent_MTases_sf"/>
</dbReference>
<dbReference type="NCBIfam" id="NF008725">
    <property type="entry name" value="PRK11727.1"/>
    <property type="match status" value="1"/>
</dbReference>
<dbReference type="PANTHER" id="PTHR13393:SF0">
    <property type="entry name" value="RNA N6-ADENOSINE-METHYLTRANSFERASE METTL16"/>
    <property type="match status" value="1"/>
</dbReference>
<dbReference type="PANTHER" id="PTHR13393">
    <property type="entry name" value="SAM-DEPENDENT METHYLTRANSFERASE"/>
    <property type="match status" value="1"/>
</dbReference>
<dbReference type="Pfam" id="PF05971">
    <property type="entry name" value="Methyltransf_10"/>
    <property type="match status" value="1"/>
</dbReference>
<dbReference type="PIRSF" id="PIRSF029038">
    <property type="entry name" value="Mtase_YbiN_prd"/>
    <property type="match status" value="1"/>
</dbReference>
<dbReference type="SUPFAM" id="SSF53335">
    <property type="entry name" value="S-adenosyl-L-methionine-dependent methyltransferases"/>
    <property type="match status" value="1"/>
</dbReference>
<reference key="1">
    <citation type="submission" date="2007-03" db="EMBL/GenBank/DDBJ databases">
        <authorList>
            <person name="Heidelberg J."/>
        </authorList>
    </citation>
    <scope>NUCLEOTIDE SEQUENCE [LARGE SCALE GENOMIC DNA]</scope>
    <source>
        <strain>ATCC 39541 / Classical Ogawa 395 / O395</strain>
    </source>
</reference>
<reference key="2">
    <citation type="journal article" date="2008" name="PLoS ONE">
        <title>A recalibrated molecular clock and independent origins for the cholera pandemic clones.</title>
        <authorList>
            <person name="Feng L."/>
            <person name="Reeves P.R."/>
            <person name="Lan R."/>
            <person name="Ren Y."/>
            <person name="Gao C."/>
            <person name="Zhou Z."/>
            <person name="Ren Y."/>
            <person name="Cheng J."/>
            <person name="Wang W."/>
            <person name="Wang J."/>
            <person name="Qian W."/>
            <person name="Li D."/>
            <person name="Wang L."/>
        </authorList>
    </citation>
    <scope>NUCLEOTIDE SEQUENCE [LARGE SCALE GENOMIC DNA]</scope>
    <source>
        <strain>ATCC 39541 / Classical Ogawa 395 / O395</strain>
    </source>
</reference>
<sequence>MNTPLKPKHGQKTNQKPKANKPVVKKQQTKQPPTHKVQGEEVAAVKSGLHPRNRHRGQYDFPALIKVVPELQSHVMKNPKGQWTINFADPIAVKLLNKALLALHYGVTYWDIPEGFLCPPIPGRADYIHRVADLLLKENPKLNPSQVTALDIGVGANCIYPIVGVTEYGWSWVGSDVDPVSIQQASLIVQSNSKLQGHIEFRLQKNSQHIFNGIIGANERYTLTTCNPPFHASLADAQQGTQRKLTNLQANQRKKGRLATPTLSHSRLNFGGQKAELWCPGGEAAFIGKMAVESQQFAQQVLWFSTLISKGDNVRGMKKQLEKLGAQSIHVIEMAQGQKISRFIAWSFQNAEQRKLWWQAKC</sequence>
<proteinExistence type="uncertain"/>
<keyword id="KW-0963">Cytoplasm</keyword>
<keyword id="KW-0489">Methyltransferase</keyword>
<keyword id="KW-0698">rRNA processing</keyword>
<keyword id="KW-0949">S-adenosyl-L-methionine</keyword>
<keyword id="KW-0808">Transferase</keyword>
<name>RLMF_VIBC3</name>
<evidence type="ECO:0000255" key="1">
    <source>
        <dbReference type="HAMAP-Rule" id="MF_01848"/>
    </source>
</evidence>
<evidence type="ECO:0000256" key="2">
    <source>
        <dbReference type="SAM" id="MobiDB-lite"/>
    </source>
</evidence>
<evidence type="ECO:0000305" key="3"/>
<organism>
    <name type="scientific">Vibrio cholerae serotype O1 (strain ATCC 39541 / Classical Ogawa 395 / O395)</name>
    <dbReference type="NCBI Taxonomy" id="345073"/>
    <lineage>
        <taxon>Bacteria</taxon>
        <taxon>Pseudomonadati</taxon>
        <taxon>Pseudomonadota</taxon>
        <taxon>Gammaproteobacteria</taxon>
        <taxon>Vibrionales</taxon>
        <taxon>Vibrionaceae</taxon>
        <taxon>Vibrio</taxon>
    </lineage>
</organism>